<gene>
    <name evidence="1" type="primary">rnc</name>
    <name type="ordered locus">Avin_13780</name>
</gene>
<keyword id="KW-0963">Cytoplasm</keyword>
<keyword id="KW-0255">Endonuclease</keyword>
<keyword id="KW-0378">Hydrolase</keyword>
<keyword id="KW-0460">Magnesium</keyword>
<keyword id="KW-0479">Metal-binding</keyword>
<keyword id="KW-0507">mRNA processing</keyword>
<keyword id="KW-0540">Nuclease</keyword>
<keyword id="KW-0694">RNA-binding</keyword>
<keyword id="KW-0698">rRNA processing</keyword>
<keyword id="KW-0699">rRNA-binding</keyword>
<keyword id="KW-0819">tRNA processing</keyword>
<feature type="chain" id="PRO_1000202834" description="Ribonuclease 3">
    <location>
        <begin position="1"/>
        <end position="229"/>
    </location>
</feature>
<feature type="domain" description="RNase III" evidence="1">
    <location>
        <begin position="5"/>
        <end position="127"/>
    </location>
</feature>
<feature type="domain" description="DRBM" evidence="1">
    <location>
        <begin position="154"/>
        <end position="224"/>
    </location>
</feature>
<feature type="active site" evidence="1">
    <location>
        <position position="44"/>
    </location>
</feature>
<feature type="active site" evidence="1">
    <location>
        <position position="116"/>
    </location>
</feature>
<feature type="binding site" evidence="1">
    <location>
        <position position="40"/>
    </location>
    <ligand>
        <name>Mg(2+)</name>
        <dbReference type="ChEBI" id="CHEBI:18420"/>
    </ligand>
</feature>
<feature type="binding site" evidence="1">
    <location>
        <position position="113"/>
    </location>
    <ligand>
        <name>Mg(2+)</name>
        <dbReference type="ChEBI" id="CHEBI:18420"/>
    </ligand>
</feature>
<feature type="binding site" evidence="1">
    <location>
        <position position="116"/>
    </location>
    <ligand>
        <name>Mg(2+)</name>
        <dbReference type="ChEBI" id="CHEBI:18420"/>
    </ligand>
</feature>
<comment type="function">
    <text evidence="1">Digests double-stranded RNA. Involved in the processing of primary rRNA transcript to yield the immediate precursors to the large and small rRNAs (23S and 16S). Processes some mRNAs, and tRNAs when they are encoded in the rRNA operon. Processes pre-crRNA and tracrRNA of type II CRISPR loci if present in the organism.</text>
</comment>
<comment type="catalytic activity">
    <reaction evidence="1">
        <text>Endonucleolytic cleavage to 5'-phosphomonoester.</text>
        <dbReference type="EC" id="3.1.26.3"/>
    </reaction>
</comment>
<comment type="cofactor">
    <cofactor evidence="1">
        <name>Mg(2+)</name>
        <dbReference type="ChEBI" id="CHEBI:18420"/>
    </cofactor>
</comment>
<comment type="subunit">
    <text evidence="1">Homodimer.</text>
</comment>
<comment type="subcellular location">
    <subcellularLocation>
        <location evidence="1">Cytoplasm</location>
    </subcellularLocation>
</comment>
<comment type="similarity">
    <text evidence="1">Belongs to the ribonuclease III family.</text>
</comment>
<organism>
    <name type="scientific">Azotobacter vinelandii (strain DJ / ATCC BAA-1303)</name>
    <dbReference type="NCBI Taxonomy" id="322710"/>
    <lineage>
        <taxon>Bacteria</taxon>
        <taxon>Pseudomonadati</taxon>
        <taxon>Pseudomonadota</taxon>
        <taxon>Gammaproteobacteria</taxon>
        <taxon>Pseudomonadales</taxon>
        <taxon>Pseudomonadaceae</taxon>
        <taxon>Azotobacter</taxon>
    </lineage>
</organism>
<evidence type="ECO:0000255" key="1">
    <source>
        <dbReference type="HAMAP-Rule" id="MF_00104"/>
    </source>
</evidence>
<dbReference type="EC" id="3.1.26.3" evidence="1"/>
<dbReference type="EMBL" id="CP001157">
    <property type="protein sequence ID" value="ACO77595.1"/>
    <property type="molecule type" value="Genomic_DNA"/>
</dbReference>
<dbReference type="RefSeq" id="WP_012700014.1">
    <property type="nucleotide sequence ID" value="NC_012560.1"/>
</dbReference>
<dbReference type="SMR" id="C1DQS2"/>
<dbReference type="STRING" id="322710.Avin_13780"/>
<dbReference type="EnsemblBacteria" id="ACO77595">
    <property type="protein sequence ID" value="ACO77595"/>
    <property type="gene ID" value="Avin_13780"/>
</dbReference>
<dbReference type="GeneID" id="88184681"/>
<dbReference type="KEGG" id="avn:Avin_13780"/>
<dbReference type="eggNOG" id="COG0571">
    <property type="taxonomic scope" value="Bacteria"/>
</dbReference>
<dbReference type="HOGENOM" id="CLU_000907_1_1_6"/>
<dbReference type="OrthoDB" id="9805026at2"/>
<dbReference type="Proteomes" id="UP000002424">
    <property type="component" value="Chromosome"/>
</dbReference>
<dbReference type="GO" id="GO:0005737">
    <property type="term" value="C:cytoplasm"/>
    <property type="evidence" value="ECO:0007669"/>
    <property type="project" value="UniProtKB-SubCell"/>
</dbReference>
<dbReference type="GO" id="GO:0003725">
    <property type="term" value="F:double-stranded RNA binding"/>
    <property type="evidence" value="ECO:0007669"/>
    <property type="project" value="TreeGrafter"/>
</dbReference>
<dbReference type="GO" id="GO:0046872">
    <property type="term" value="F:metal ion binding"/>
    <property type="evidence" value="ECO:0007669"/>
    <property type="project" value="UniProtKB-KW"/>
</dbReference>
<dbReference type="GO" id="GO:0004525">
    <property type="term" value="F:ribonuclease III activity"/>
    <property type="evidence" value="ECO:0007669"/>
    <property type="project" value="UniProtKB-UniRule"/>
</dbReference>
<dbReference type="GO" id="GO:0019843">
    <property type="term" value="F:rRNA binding"/>
    <property type="evidence" value="ECO:0007669"/>
    <property type="project" value="UniProtKB-KW"/>
</dbReference>
<dbReference type="GO" id="GO:0006397">
    <property type="term" value="P:mRNA processing"/>
    <property type="evidence" value="ECO:0007669"/>
    <property type="project" value="UniProtKB-UniRule"/>
</dbReference>
<dbReference type="GO" id="GO:0010468">
    <property type="term" value="P:regulation of gene expression"/>
    <property type="evidence" value="ECO:0007669"/>
    <property type="project" value="TreeGrafter"/>
</dbReference>
<dbReference type="GO" id="GO:0006364">
    <property type="term" value="P:rRNA processing"/>
    <property type="evidence" value="ECO:0007669"/>
    <property type="project" value="UniProtKB-UniRule"/>
</dbReference>
<dbReference type="GO" id="GO:0008033">
    <property type="term" value="P:tRNA processing"/>
    <property type="evidence" value="ECO:0007669"/>
    <property type="project" value="UniProtKB-KW"/>
</dbReference>
<dbReference type="CDD" id="cd10845">
    <property type="entry name" value="DSRM_RNAse_III_family"/>
    <property type="match status" value="1"/>
</dbReference>
<dbReference type="CDD" id="cd00593">
    <property type="entry name" value="RIBOc"/>
    <property type="match status" value="1"/>
</dbReference>
<dbReference type="FunFam" id="1.10.1520.10:FF:000001">
    <property type="entry name" value="Ribonuclease 3"/>
    <property type="match status" value="1"/>
</dbReference>
<dbReference type="FunFam" id="3.30.160.20:FF:000003">
    <property type="entry name" value="Ribonuclease 3"/>
    <property type="match status" value="1"/>
</dbReference>
<dbReference type="Gene3D" id="3.30.160.20">
    <property type="match status" value="1"/>
</dbReference>
<dbReference type="Gene3D" id="1.10.1520.10">
    <property type="entry name" value="Ribonuclease III domain"/>
    <property type="match status" value="1"/>
</dbReference>
<dbReference type="HAMAP" id="MF_00104">
    <property type="entry name" value="RNase_III"/>
    <property type="match status" value="1"/>
</dbReference>
<dbReference type="InterPro" id="IPR014720">
    <property type="entry name" value="dsRBD_dom"/>
</dbReference>
<dbReference type="InterPro" id="IPR011907">
    <property type="entry name" value="RNase_III"/>
</dbReference>
<dbReference type="InterPro" id="IPR000999">
    <property type="entry name" value="RNase_III_dom"/>
</dbReference>
<dbReference type="InterPro" id="IPR036389">
    <property type="entry name" value="RNase_III_sf"/>
</dbReference>
<dbReference type="NCBIfam" id="TIGR02191">
    <property type="entry name" value="RNaseIII"/>
    <property type="match status" value="1"/>
</dbReference>
<dbReference type="PANTHER" id="PTHR11207:SF0">
    <property type="entry name" value="RIBONUCLEASE 3"/>
    <property type="match status" value="1"/>
</dbReference>
<dbReference type="PANTHER" id="PTHR11207">
    <property type="entry name" value="RIBONUCLEASE III"/>
    <property type="match status" value="1"/>
</dbReference>
<dbReference type="Pfam" id="PF00035">
    <property type="entry name" value="dsrm"/>
    <property type="match status" value="1"/>
</dbReference>
<dbReference type="Pfam" id="PF14622">
    <property type="entry name" value="Ribonucleas_3_3"/>
    <property type="match status" value="1"/>
</dbReference>
<dbReference type="SMART" id="SM00358">
    <property type="entry name" value="DSRM"/>
    <property type="match status" value="1"/>
</dbReference>
<dbReference type="SMART" id="SM00535">
    <property type="entry name" value="RIBOc"/>
    <property type="match status" value="1"/>
</dbReference>
<dbReference type="SUPFAM" id="SSF54768">
    <property type="entry name" value="dsRNA-binding domain-like"/>
    <property type="match status" value="1"/>
</dbReference>
<dbReference type="SUPFAM" id="SSF69065">
    <property type="entry name" value="RNase III domain-like"/>
    <property type="match status" value="1"/>
</dbReference>
<dbReference type="PROSITE" id="PS50137">
    <property type="entry name" value="DS_RBD"/>
    <property type="match status" value="1"/>
</dbReference>
<dbReference type="PROSITE" id="PS00517">
    <property type="entry name" value="RNASE_3_1"/>
    <property type="match status" value="1"/>
</dbReference>
<dbReference type="PROSITE" id="PS50142">
    <property type="entry name" value="RNASE_3_2"/>
    <property type="match status" value="1"/>
</dbReference>
<accession>C1DQS2</accession>
<protein>
    <recommendedName>
        <fullName evidence="1">Ribonuclease 3</fullName>
        <ecNumber evidence="1">3.1.26.3</ecNumber>
    </recommendedName>
    <alternativeName>
        <fullName evidence="1">Ribonuclease III</fullName>
        <shortName evidence="1">RNase III</shortName>
    </alternativeName>
</protein>
<sequence>MSASLNRLERKLGHTFKNQDLMLLALTHRSFASRNNERLEFLGDAILNFVAGEALFERFPQAKEGQLSRLRARLVKGETLALLARGFDLGDHLRLGSGELKSGGFRRESILADALEALIGAIYLDAGLNTVRERVLGWLAGELDSLTLVDTNKDPKTRLQEFLQSRACELPRYEVVDIQGEPHCRTFFVECRVALLNDKTYGQGASRRIAEQVAAAAALVALGVENGND</sequence>
<proteinExistence type="inferred from homology"/>
<reference key="1">
    <citation type="journal article" date="2009" name="J. Bacteriol.">
        <title>Genome sequence of Azotobacter vinelandii, an obligate aerobe specialized to support diverse anaerobic metabolic processes.</title>
        <authorList>
            <person name="Setubal J.C."/>
            <person name="Dos Santos P."/>
            <person name="Goldman B.S."/>
            <person name="Ertesvaag H."/>
            <person name="Espin G."/>
            <person name="Rubio L.M."/>
            <person name="Valla S."/>
            <person name="Almeida N.F."/>
            <person name="Balasubramanian D."/>
            <person name="Cromes L."/>
            <person name="Curatti L."/>
            <person name="Du Z."/>
            <person name="Godsy E."/>
            <person name="Goodner B."/>
            <person name="Hellner-Burris K."/>
            <person name="Hernandez J.A."/>
            <person name="Houmiel K."/>
            <person name="Imperial J."/>
            <person name="Kennedy C."/>
            <person name="Larson T.J."/>
            <person name="Latreille P."/>
            <person name="Ligon L.S."/>
            <person name="Lu J."/>
            <person name="Maerk M."/>
            <person name="Miller N.M."/>
            <person name="Norton S."/>
            <person name="O'Carroll I.P."/>
            <person name="Paulsen I."/>
            <person name="Raulfs E.C."/>
            <person name="Roemer R."/>
            <person name="Rosser J."/>
            <person name="Segura D."/>
            <person name="Slater S."/>
            <person name="Stricklin S.L."/>
            <person name="Studholme D.J."/>
            <person name="Sun J."/>
            <person name="Viana C.J."/>
            <person name="Wallin E."/>
            <person name="Wang B."/>
            <person name="Wheeler C."/>
            <person name="Zhu H."/>
            <person name="Dean D.R."/>
            <person name="Dixon R."/>
            <person name="Wood D."/>
        </authorList>
    </citation>
    <scope>NUCLEOTIDE SEQUENCE [LARGE SCALE GENOMIC DNA]</scope>
    <source>
        <strain>DJ / ATCC BAA-1303</strain>
    </source>
</reference>
<name>RNC_AZOVD</name>